<reference key="1">
    <citation type="journal article" date="2000" name="Nature">
        <title>Sequence and analysis of chromosome 3 of the plant Arabidopsis thaliana.</title>
        <authorList>
            <person name="Salanoubat M."/>
            <person name="Lemcke K."/>
            <person name="Rieger M."/>
            <person name="Ansorge W."/>
            <person name="Unseld M."/>
            <person name="Fartmann B."/>
            <person name="Valle G."/>
            <person name="Bloecker H."/>
            <person name="Perez-Alonso M."/>
            <person name="Obermaier B."/>
            <person name="Delseny M."/>
            <person name="Boutry M."/>
            <person name="Grivell L.A."/>
            <person name="Mache R."/>
            <person name="Puigdomenech P."/>
            <person name="De Simone V."/>
            <person name="Choisne N."/>
            <person name="Artiguenave F."/>
            <person name="Robert C."/>
            <person name="Brottier P."/>
            <person name="Wincker P."/>
            <person name="Cattolico L."/>
            <person name="Weissenbach J."/>
            <person name="Saurin W."/>
            <person name="Quetier F."/>
            <person name="Schaefer M."/>
            <person name="Mueller-Auer S."/>
            <person name="Gabel C."/>
            <person name="Fuchs M."/>
            <person name="Benes V."/>
            <person name="Wurmbach E."/>
            <person name="Drzonek H."/>
            <person name="Erfle H."/>
            <person name="Jordan N."/>
            <person name="Bangert S."/>
            <person name="Wiedelmann R."/>
            <person name="Kranz H."/>
            <person name="Voss H."/>
            <person name="Holland R."/>
            <person name="Brandt P."/>
            <person name="Nyakatura G."/>
            <person name="Vezzi A."/>
            <person name="D'Angelo M."/>
            <person name="Pallavicini A."/>
            <person name="Toppo S."/>
            <person name="Simionati B."/>
            <person name="Conrad A."/>
            <person name="Hornischer K."/>
            <person name="Kauer G."/>
            <person name="Loehnert T.-H."/>
            <person name="Nordsiek G."/>
            <person name="Reichelt J."/>
            <person name="Scharfe M."/>
            <person name="Schoen O."/>
            <person name="Bargues M."/>
            <person name="Terol J."/>
            <person name="Climent J."/>
            <person name="Navarro P."/>
            <person name="Collado C."/>
            <person name="Perez-Perez A."/>
            <person name="Ottenwaelder B."/>
            <person name="Duchemin D."/>
            <person name="Cooke R."/>
            <person name="Laudie M."/>
            <person name="Berger-Llauro C."/>
            <person name="Purnelle B."/>
            <person name="Masuy D."/>
            <person name="de Haan M."/>
            <person name="Maarse A.C."/>
            <person name="Alcaraz J.-P."/>
            <person name="Cottet A."/>
            <person name="Casacuberta E."/>
            <person name="Monfort A."/>
            <person name="Argiriou A."/>
            <person name="Flores M."/>
            <person name="Liguori R."/>
            <person name="Vitale D."/>
            <person name="Mannhaupt G."/>
            <person name="Haase D."/>
            <person name="Schoof H."/>
            <person name="Rudd S."/>
            <person name="Zaccaria P."/>
            <person name="Mewes H.-W."/>
            <person name="Mayer K.F.X."/>
            <person name="Kaul S."/>
            <person name="Town C.D."/>
            <person name="Koo H.L."/>
            <person name="Tallon L.J."/>
            <person name="Jenkins J."/>
            <person name="Rooney T."/>
            <person name="Rizzo M."/>
            <person name="Walts A."/>
            <person name="Utterback T."/>
            <person name="Fujii C.Y."/>
            <person name="Shea T.P."/>
            <person name="Creasy T.H."/>
            <person name="Haas B."/>
            <person name="Maiti R."/>
            <person name="Wu D."/>
            <person name="Peterson J."/>
            <person name="Van Aken S."/>
            <person name="Pai G."/>
            <person name="Militscher J."/>
            <person name="Sellers P."/>
            <person name="Gill J.E."/>
            <person name="Feldblyum T.V."/>
            <person name="Preuss D."/>
            <person name="Lin X."/>
            <person name="Nierman W.C."/>
            <person name="Salzberg S.L."/>
            <person name="White O."/>
            <person name="Venter J.C."/>
            <person name="Fraser C.M."/>
            <person name="Kaneko T."/>
            <person name="Nakamura Y."/>
            <person name="Sato S."/>
            <person name="Kato T."/>
            <person name="Asamizu E."/>
            <person name="Sasamoto S."/>
            <person name="Kimura T."/>
            <person name="Idesawa K."/>
            <person name="Kawashima K."/>
            <person name="Kishida Y."/>
            <person name="Kiyokawa C."/>
            <person name="Kohara M."/>
            <person name="Matsumoto M."/>
            <person name="Matsuno A."/>
            <person name="Muraki A."/>
            <person name="Nakayama S."/>
            <person name="Nakazaki N."/>
            <person name="Shinpo S."/>
            <person name="Takeuchi C."/>
            <person name="Wada T."/>
            <person name="Watanabe A."/>
            <person name="Yamada M."/>
            <person name="Yasuda M."/>
            <person name="Tabata S."/>
        </authorList>
    </citation>
    <scope>NUCLEOTIDE SEQUENCE [LARGE SCALE GENOMIC DNA]</scope>
    <source>
        <strain>cv. Columbia</strain>
    </source>
</reference>
<reference key="2">
    <citation type="journal article" date="2017" name="Plant J.">
        <title>Araport11: a complete reannotation of the Arabidopsis thaliana reference genome.</title>
        <authorList>
            <person name="Cheng C.Y."/>
            <person name="Krishnakumar V."/>
            <person name="Chan A.P."/>
            <person name="Thibaud-Nissen F."/>
            <person name="Schobel S."/>
            <person name="Town C.D."/>
        </authorList>
    </citation>
    <scope>GENOME REANNOTATION</scope>
    <source>
        <strain>cv. Columbia</strain>
    </source>
</reference>
<reference key="3">
    <citation type="submission" date="2008-04" db="EMBL/GenBank/DDBJ databases">
        <title>Arabidopsis ORF clones.</title>
        <authorList>
            <person name="De Los Reyes C."/>
            <person name="Quan R."/>
            <person name="Chen H."/>
            <person name="Bautista V.R."/>
            <person name="Kim C.J."/>
            <person name="Ecker J.R."/>
        </authorList>
    </citation>
    <scope>NUCLEOTIDE SEQUENCE [LARGE SCALE MRNA]</scope>
    <source>
        <strain>cv. Columbia</strain>
    </source>
</reference>
<reference key="4">
    <citation type="journal article" date="2002" name="Genome Biol.">
        <title>Evaluation and classification of RING-finger domains encoded by the Arabidopsis genome.</title>
        <authorList>
            <person name="Kosarev P."/>
            <person name="Mayer K.F.X."/>
            <person name="Hardtke C.S."/>
        </authorList>
    </citation>
    <scope>GENE FAMILY ORGANIZATION</scope>
</reference>
<reference key="5">
    <citation type="journal article" date="2006" name="J. Mol. Evol.">
        <title>The ATL gene family from Arabidopsis thaliana and Oryza sativa comprises a large number of putative ubiquitin ligases of the RING-H2 type.</title>
        <authorList>
            <person name="Serrano M."/>
            <person name="Parra S."/>
            <person name="Alcaraz L.D."/>
            <person name="Guzman P."/>
        </authorList>
    </citation>
    <scope>NOMENCLATURE</scope>
    <scope>GENE FAMILY ORGANIZATION</scope>
</reference>
<feature type="chain" id="PRO_0000055789" description="RING-H2 finger protein ATL66">
    <location>
        <begin position="1"/>
        <end position="158"/>
    </location>
</feature>
<feature type="transmembrane region" description="Helical" evidence="2">
    <location>
        <begin position="33"/>
        <end position="53"/>
    </location>
</feature>
<feature type="zinc finger region" description="RING-type; atypical" evidence="3">
    <location>
        <begin position="107"/>
        <end position="149"/>
    </location>
</feature>
<protein>
    <recommendedName>
        <fullName>RING-H2 finger protein ATL66</fullName>
        <ecNumber evidence="4">2.3.2.27</ecNumber>
    </recommendedName>
    <alternativeName>
        <fullName evidence="4">RING-type E3 ubiquitin transferase ATL66</fullName>
    </alternativeName>
</protein>
<dbReference type="EC" id="2.3.2.27" evidence="4"/>
<dbReference type="EMBL" id="AC009991">
    <property type="protein sequence ID" value="AAF01530.1"/>
    <property type="molecule type" value="Genomic_DNA"/>
</dbReference>
<dbReference type="EMBL" id="AC073395">
    <property type="protein sequence ID" value="AAG50960.1"/>
    <property type="molecule type" value="Genomic_DNA"/>
</dbReference>
<dbReference type="EMBL" id="CP002686">
    <property type="protein sequence ID" value="AEE75003.1"/>
    <property type="molecule type" value="Genomic_DNA"/>
</dbReference>
<dbReference type="EMBL" id="BT031381">
    <property type="protein sequence ID" value="ACB88837.1"/>
    <property type="molecule type" value="mRNA"/>
</dbReference>
<dbReference type="RefSeq" id="NP_187722.1">
    <property type="nucleotide sequence ID" value="NM_111948.2"/>
</dbReference>
<dbReference type="SMR" id="Q9SRM0"/>
<dbReference type="BioGRID" id="5616">
    <property type="interactions" value="1"/>
</dbReference>
<dbReference type="FunCoup" id="Q9SRM0">
    <property type="interactions" value="200"/>
</dbReference>
<dbReference type="IntAct" id="Q9SRM0">
    <property type="interactions" value="1"/>
</dbReference>
<dbReference type="STRING" id="3702.Q9SRM0"/>
<dbReference type="iPTMnet" id="Q9SRM0"/>
<dbReference type="PaxDb" id="3702-AT3G11110.1"/>
<dbReference type="EnsemblPlants" id="AT3G11110.1">
    <property type="protein sequence ID" value="AT3G11110.1"/>
    <property type="gene ID" value="AT3G11110"/>
</dbReference>
<dbReference type="GeneID" id="820282"/>
<dbReference type="Gramene" id="AT3G11110.1">
    <property type="protein sequence ID" value="AT3G11110.1"/>
    <property type="gene ID" value="AT3G11110"/>
</dbReference>
<dbReference type="KEGG" id="ath:AT3G11110"/>
<dbReference type="Araport" id="AT3G11110"/>
<dbReference type="TAIR" id="AT3G11110">
    <property type="gene designation" value="ATL66"/>
</dbReference>
<dbReference type="eggNOG" id="KOG0800">
    <property type="taxonomic scope" value="Eukaryota"/>
</dbReference>
<dbReference type="HOGENOM" id="CLU_013137_15_7_1"/>
<dbReference type="InParanoid" id="Q9SRM0"/>
<dbReference type="OMA" id="VCSFYRE"/>
<dbReference type="PhylomeDB" id="Q9SRM0"/>
<dbReference type="UniPathway" id="UPA00143"/>
<dbReference type="PRO" id="PR:Q9SRM0"/>
<dbReference type="Proteomes" id="UP000006548">
    <property type="component" value="Chromosome 3"/>
</dbReference>
<dbReference type="ExpressionAtlas" id="Q9SRM0">
    <property type="expression patterns" value="baseline and differential"/>
</dbReference>
<dbReference type="GO" id="GO:0016020">
    <property type="term" value="C:membrane"/>
    <property type="evidence" value="ECO:0007669"/>
    <property type="project" value="UniProtKB-SubCell"/>
</dbReference>
<dbReference type="GO" id="GO:0016740">
    <property type="term" value="F:transferase activity"/>
    <property type="evidence" value="ECO:0007669"/>
    <property type="project" value="UniProtKB-KW"/>
</dbReference>
<dbReference type="GO" id="GO:0008270">
    <property type="term" value="F:zinc ion binding"/>
    <property type="evidence" value="ECO:0007669"/>
    <property type="project" value="UniProtKB-KW"/>
</dbReference>
<dbReference type="GO" id="GO:0016567">
    <property type="term" value="P:protein ubiquitination"/>
    <property type="evidence" value="ECO:0007669"/>
    <property type="project" value="UniProtKB-UniPathway"/>
</dbReference>
<dbReference type="CDD" id="cd16467">
    <property type="entry name" value="RING-H2_RNF6-like"/>
    <property type="match status" value="1"/>
</dbReference>
<dbReference type="FunFam" id="3.30.40.10:FF:000461">
    <property type="entry name" value="RING-H2 finger protein ATL66"/>
    <property type="match status" value="1"/>
</dbReference>
<dbReference type="Gene3D" id="3.30.40.10">
    <property type="entry name" value="Zinc/RING finger domain, C3HC4 (zinc finger)"/>
    <property type="match status" value="1"/>
</dbReference>
<dbReference type="InterPro" id="IPR044600">
    <property type="entry name" value="ATL1/ATL16-like"/>
</dbReference>
<dbReference type="InterPro" id="IPR001841">
    <property type="entry name" value="Znf_RING"/>
</dbReference>
<dbReference type="InterPro" id="IPR013083">
    <property type="entry name" value="Znf_RING/FYVE/PHD"/>
</dbReference>
<dbReference type="PANTHER" id="PTHR46913">
    <property type="entry name" value="RING-H2 FINGER PROTEIN ATL16"/>
    <property type="match status" value="1"/>
</dbReference>
<dbReference type="PANTHER" id="PTHR46913:SF1">
    <property type="entry name" value="RING-H2 FINGER PROTEIN ATL16"/>
    <property type="match status" value="1"/>
</dbReference>
<dbReference type="Pfam" id="PF13639">
    <property type="entry name" value="zf-RING_2"/>
    <property type="match status" value="1"/>
</dbReference>
<dbReference type="SMART" id="SM00184">
    <property type="entry name" value="RING"/>
    <property type="match status" value="1"/>
</dbReference>
<dbReference type="SUPFAM" id="SSF57850">
    <property type="entry name" value="RING/U-box"/>
    <property type="match status" value="1"/>
</dbReference>
<dbReference type="PROSITE" id="PS50089">
    <property type="entry name" value="ZF_RING_2"/>
    <property type="match status" value="1"/>
</dbReference>
<proteinExistence type="evidence at transcript level"/>
<evidence type="ECO:0000250" key="1"/>
<evidence type="ECO:0000255" key="2"/>
<evidence type="ECO:0000255" key="3">
    <source>
        <dbReference type="PROSITE-ProRule" id="PRU00175"/>
    </source>
</evidence>
<evidence type="ECO:0000305" key="4"/>
<accession>Q9SRM0</accession>
<accession>B2GVN5</accession>
<organism>
    <name type="scientific">Arabidopsis thaliana</name>
    <name type="common">Mouse-ear cress</name>
    <dbReference type="NCBI Taxonomy" id="3702"/>
    <lineage>
        <taxon>Eukaryota</taxon>
        <taxon>Viridiplantae</taxon>
        <taxon>Streptophyta</taxon>
        <taxon>Embryophyta</taxon>
        <taxon>Tracheophyta</taxon>
        <taxon>Spermatophyta</taxon>
        <taxon>Magnoliopsida</taxon>
        <taxon>eudicotyledons</taxon>
        <taxon>Gunneridae</taxon>
        <taxon>Pentapetalae</taxon>
        <taxon>rosids</taxon>
        <taxon>malvids</taxon>
        <taxon>Brassicales</taxon>
        <taxon>Brassicaceae</taxon>
        <taxon>Camelineae</taxon>
        <taxon>Arabidopsis</taxon>
    </lineage>
</organism>
<sequence length="158" mass="18090">MTSSSPSPQASMLLYWHENQYDDRNFQIHGRTLFFALALFSVVLFFALLTLYIHRNCLPRDSINLHASSPDRLTRCRSGGLDPAEIRSLPVVLCRRERAEEEEEKECCICLGGFEEGEKMKVLPPCSHCYHCECVDRWLKTESSCPLCRVSIRVDSSS</sequence>
<gene>
    <name type="primary">ATL66</name>
    <name type="ordered locus">At3g11110</name>
    <name type="ORF">F11B9.7</name>
    <name type="ORF">F9F8.8</name>
</gene>
<keyword id="KW-0472">Membrane</keyword>
<keyword id="KW-0479">Metal-binding</keyword>
<keyword id="KW-1185">Reference proteome</keyword>
<keyword id="KW-0808">Transferase</keyword>
<keyword id="KW-0812">Transmembrane</keyword>
<keyword id="KW-1133">Transmembrane helix</keyword>
<keyword id="KW-0833">Ubl conjugation pathway</keyword>
<keyword id="KW-0862">Zinc</keyword>
<keyword id="KW-0863">Zinc-finger</keyword>
<name>ATL66_ARATH</name>
<comment type="catalytic activity">
    <reaction evidence="4">
        <text>S-ubiquitinyl-[E2 ubiquitin-conjugating enzyme]-L-cysteine + [acceptor protein]-L-lysine = [E2 ubiquitin-conjugating enzyme]-L-cysteine + N(6)-ubiquitinyl-[acceptor protein]-L-lysine.</text>
        <dbReference type="EC" id="2.3.2.27"/>
    </reaction>
</comment>
<comment type="pathway">
    <text>Protein modification; protein ubiquitination.</text>
</comment>
<comment type="subcellular location">
    <subcellularLocation>
        <location evidence="4">Membrane</location>
        <topology evidence="4">Single-pass membrane protein</topology>
    </subcellularLocation>
</comment>
<comment type="domain">
    <text evidence="1">The RING-type zinc finger domain mediates binding to an E2 ubiquitin-conjugating enzyme.</text>
</comment>
<comment type="similarity">
    <text evidence="4">Belongs to the RING-type zinc finger family. ATL subfamily.</text>
</comment>